<accession>Q9NBD7</accession>
<accession>A4V279</accession>
<accession>Q9NL57</accession>
<reference key="1">
    <citation type="journal article" date="2000" name="EMBO J.">
        <title>Mast, a conserved microtubule-associated protein required for bipolar mitotic spindle organization.</title>
        <authorList>
            <person name="Lemos C.L."/>
            <person name="Sampaio P."/>
            <person name="Maiato H."/>
            <person name="Costa M."/>
            <person name="Omel'yanchuk L.V."/>
            <person name="Liberal V."/>
            <person name="Sunkel C.E."/>
        </authorList>
    </citation>
    <scope>NUCLEOTIDE SEQUENCE [MRNA]</scope>
    <scope>FUNCTION</scope>
    <scope>INTERACTION WITH MICROTUBULES</scope>
    <scope>SUBCELLULAR LOCATION</scope>
    <scope>TISSUE SPECIFICITY</scope>
    <scope>DEVELOPMENTAL STAGE</scope>
</reference>
<reference key="2">
    <citation type="journal article" date="2000" name="Genetics">
        <title>A misexpression screen identifies genes that can modulate RAS1 pathway signaling in Drosophila melanogaster.</title>
        <authorList>
            <person name="Huang A.M."/>
            <person name="Rubin G.M."/>
        </authorList>
    </citation>
    <scope>NUCLEOTIDE SEQUENCE [MRNA]</scope>
</reference>
<reference key="3">
    <citation type="journal article" date="2000" name="J. Cell Biol.">
        <title>Orbit, a novel microtubule-associated protein essential for mitosis in Drosophila melanogaster.</title>
        <authorList>
            <person name="Inoue Y.H."/>
            <person name="do Carmo Avides M."/>
            <person name="Shiraki M."/>
            <person name="Deak P."/>
            <person name="Yamaguchi M."/>
            <person name="Nishimoto Y."/>
            <person name="Matsukage A."/>
            <person name="Glover D.M."/>
        </authorList>
    </citation>
    <scope>NUCLEOTIDE SEQUENCE [MRNA]</scope>
    <scope>FUNCTION</scope>
    <scope>INTERACTION WITH MICROTUBULES</scope>
    <scope>SUBCELLULAR LOCATION</scope>
    <scope>DEVELOPMENTAL STAGE</scope>
</reference>
<reference key="4">
    <citation type="journal article" date="2000" name="Science">
        <title>The genome sequence of Drosophila melanogaster.</title>
        <authorList>
            <person name="Adams M.D."/>
            <person name="Celniker S.E."/>
            <person name="Holt R.A."/>
            <person name="Evans C.A."/>
            <person name="Gocayne J.D."/>
            <person name="Amanatides P.G."/>
            <person name="Scherer S.E."/>
            <person name="Li P.W."/>
            <person name="Hoskins R.A."/>
            <person name="Galle R.F."/>
            <person name="George R.A."/>
            <person name="Lewis S.E."/>
            <person name="Richards S."/>
            <person name="Ashburner M."/>
            <person name="Henderson S.N."/>
            <person name="Sutton G.G."/>
            <person name="Wortman J.R."/>
            <person name="Yandell M.D."/>
            <person name="Zhang Q."/>
            <person name="Chen L.X."/>
            <person name="Brandon R.C."/>
            <person name="Rogers Y.-H.C."/>
            <person name="Blazej R.G."/>
            <person name="Champe M."/>
            <person name="Pfeiffer B.D."/>
            <person name="Wan K.H."/>
            <person name="Doyle C."/>
            <person name="Baxter E.G."/>
            <person name="Helt G."/>
            <person name="Nelson C.R."/>
            <person name="Miklos G.L.G."/>
            <person name="Abril J.F."/>
            <person name="Agbayani A."/>
            <person name="An H.-J."/>
            <person name="Andrews-Pfannkoch C."/>
            <person name="Baldwin D."/>
            <person name="Ballew R.M."/>
            <person name="Basu A."/>
            <person name="Baxendale J."/>
            <person name="Bayraktaroglu L."/>
            <person name="Beasley E.M."/>
            <person name="Beeson K.Y."/>
            <person name="Benos P.V."/>
            <person name="Berman B.P."/>
            <person name="Bhandari D."/>
            <person name="Bolshakov S."/>
            <person name="Borkova D."/>
            <person name="Botchan M.R."/>
            <person name="Bouck J."/>
            <person name="Brokstein P."/>
            <person name="Brottier P."/>
            <person name="Burtis K.C."/>
            <person name="Busam D.A."/>
            <person name="Butler H."/>
            <person name="Cadieu E."/>
            <person name="Center A."/>
            <person name="Chandra I."/>
            <person name="Cherry J.M."/>
            <person name="Cawley S."/>
            <person name="Dahlke C."/>
            <person name="Davenport L.B."/>
            <person name="Davies P."/>
            <person name="de Pablos B."/>
            <person name="Delcher A."/>
            <person name="Deng Z."/>
            <person name="Mays A.D."/>
            <person name="Dew I."/>
            <person name="Dietz S.M."/>
            <person name="Dodson K."/>
            <person name="Doup L.E."/>
            <person name="Downes M."/>
            <person name="Dugan-Rocha S."/>
            <person name="Dunkov B.C."/>
            <person name="Dunn P."/>
            <person name="Durbin K.J."/>
            <person name="Evangelista C.C."/>
            <person name="Ferraz C."/>
            <person name="Ferriera S."/>
            <person name="Fleischmann W."/>
            <person name="Fosler C."/>
            <person name="Gabrielian A.E."/>
            <person name="Garg N.S."/>
            <person name="Gelbart W.M."/>
            <person name="Glasser K."/>
            <person name="Glodek A."/>
            <person name="Gong F."/>
            <person name="Gorrell J.H."/>
            <person name="Gu Z."/>
            <person name="Guan P."/>
            <person name="Harris M."/>
            <person name="Harris N.L."/>
            <person name="Harvey D.A."/>
            <person name="Heiman T.J."/>
            <person name="Hernandez J.R."/>
            <person name="Houck J."/>
            <person name="Hostin D."/>
            <person name="Houston K.A."/>
            <person name="Howland T.J."/>
            <person name="Wei M.-H."/>
            <person name="Ibegwam C."/>
            <person name="Jalali M."/>
            <person name="Kalush F."/>
            <person name="Karpen G.H."/>
            <person name="Ke Z."/>
            <person name="Kennison J.A."/>
            <person name="Ketchum K.A."/>
            <person name="Kimmel B.E."/>
            <person name="Kodira C.D."/>
            <person name="Kraft C.L."/>
            <person name="Kravitz S."/>
            <person name="Kulp D."/>
            <person name="Lai Z."/>
            <person name="Lasko P."/>
            <person name="Lei Y."/>
            <person name="Levitsky A.A."/>
            <person name="Li J.H."/>
            <person name="Li Z."/>
            <person name="Liang Y."/>
            <person name="Lin X."/>
            <person name="Liu X."/>
            <person name="Mattei B."/>
            <person name="McIntosh T.C."/>
            <person name="McLeod M.P."/>
            <person name="McPherson D."/>
            <person name="Merkulov G."/>
            <person name="Milshina N.V."/>
            <person name="Mobarry C."/>
            <person name="Morris J."/>
            <person name="Moshrefi A."/>
            <person name="Mount S.M."/>
            <person name="Moy M."/>
            <person name="Murphy B."/>
            <person name="Murphy L."/>
            <person name="Muzny D.M."/>
            <person name="Nelson D.L."/>
            <person name="Nelson D.R."/>
            <person name="Nelson K.A."/>
            <person name="Nixon K."/>
            <person name="Nusskern D.R."/>
            <person name="Pacleb J.M."/>
            <person name="Palazzolo M."/>
            <person name="Pittman G.S."/>
            <person name="Pan S."/>
            <person name="Pollard J."/>
            <person name="Puri V."/>
            <person name="Reese M.G."/>
            <person name="Reinert K."/>
            <person name="Remington K."/>
            <person name="Saunders R.D.C."/>
            <person name="Scheeler F."/>
            <person name="Shen H."/>
            <person name="Shue B.C."/>
            <person name="Siden-Kiamos I."/>
            <person name="Simpson M."/>
            <person name="Skupski M.P."/>
            <person name="Smith T.J."/>
            <person name="Spier E."/>
            <person name="Spradling A.C."/>
            <person name="Stapleton M."/>
            <person name="Strong R."/>
            <person name="Sun E."/>
            <person name="Svirskas R."/>
            <person name="Tector C."/>
            <person name="Turner R."/>
            <person name="Venter E."/>
            <person name="Wang A.H."/>
            <person name="Wang X."/>
            <person name="Wang Z.-Y."/>
            <person name="Wassarman D.A."/>
            <person name="Weinstock G.M."/>
            <person name="Weissenbach J."/>
            <person name="Williams S.M."/>
            <person name="Woodage T."/>
            <person name="Worley K.C."/>
            <person name="Wu D."/>
            <person name="Yang S."/>
            <person name="Yao Q.A."/>
            <person name="Ye J."/>
            <person name="Yeh R.-F."/>
            <person name="Zaveri J.S."/>
            <person name="Zhan M."/>
            <person name="Zhang G."/>
            <person name="Zhao Q."/>
            <person name="Zheng L."/>
            <person name="Zheng X.H."/>
            <person name="Zhong F.N."/>
            <person name="Zhong W."/>
            <person name="Zhou X."/>
            <person name="Zhu S.C."/>
            <person name="Zhu X."/>
            <person name="Smith H.O."/>
            <person name="Gibbs R.A."/>
            <person name="Myers E.W."/>
            <person name="Rubin G.M."/>
            <person name="Venter J.C."/>
        </authorList>
    </citation>
    <scope>NUCLEOTIDE SEQUENCE [LARGE SCALE GENOMIC DNA]</scope>
    <source>
        <strain>Berkeley</strain>
    </source>
</reference>
<reference key="5">
    <citation type="journal article" date="2002" name="Genome Biol.">
        <title>Annotation of the Drosophila melanogaster euchromatic genome: a systematic review.</title>
        <authorList>
            <person name="Misra S."/>
            <person name="Crosby M.A."/>
            <person name="Mungall C.J."/>
            <person name="Matthews B.B."/>
            <person name="Campbell K.S."/>
            <person name="Hradecky P."/>
            <person name="Huang Y."/>
            <person name="Kaminker J.S."/>
            <person name="Millburn G.H."/>
            <person name="Prochnik S.E."/>
            <person name="Smith C.D."/>
            <person name="Tupy J.L."/>
            <person name="Whitfield E.J."/>
            <person name="Bayraktaroglu L."/>
            <person name="Berman B.P."/>
            <person name="Bettencourt B.R."/>
            <person name="Celniker S.E."/>
            <person name="de Grey A.D.N.J."/>
            <person name="Drysdale R.A."/>
            <person name="Harris N.L."/>
            <person name="Richter J."/>
            <person name="Russo S."/>
            <person name="Schroeder A.J."/>
            <person name="Shu S.Q."/>
            <person name="Stapleton M."/>
            <person name="Yamada C."/>
            <person name="Ashburner M."/>
            <person name="Gelbart W.M."/>
            <person name="Rubin G.M."/>
            <person name="Lewis S.E."/>
        </authorList>
    </citation>
    <scope>GENOME REANNOTATION</scope>
    <source>
        <strain>Berkeley</strain>
    </source>
</reference>
<reference key="6">
    <citation type="journal article" date="2002" name="Genome Biol.">
        <title>A Drosophila full-length cDNA resource.</title>
        <authorList>
            <person name="Stapleton M."/>
            <person name="Carlson J.W."/>
            <person name="Brokstein P."/>
            <person name="Yu C."/>
            <person name="Champe M."/>
            <person name="George R.A."/>
            <person name="Guarin H."/>
            <person name="Kronmiller B."/>
            <person name="Pacleb J.M."/>
            <person name="Park S."/>
            <person name="Wan K.H."/>
            <person name="Rubin G.M."/>
            <person name="Celniker S.E."/>
        </authorList>
    </citation>
    <scope>NUCLEOTIDE SEQUENCE [LARGE SCALE MRNA]</scope>
    <source>
        <strain>Berkeley</strain>
        <tissue>Embryo</tissue>
    </source>
</reference>
<reference key="7">
    <citation type="journal article" date="2002" name="J. Cell Biol.">
        <title>MAST/Orbit has a role in microtubule-kinetochore attachment and is essential for chromosome alignment and maintenance of spindle bipolarity.</title>
        <authorList>
            <person name="Maiato H."/>
            <person name="Sampaio P."/>
            <person name="Lemos C.L."/>
            <person name="Findlay J."/>
            <person name="Carmena M."/>
            <person name="Earnshaw W.C."/>
            <person name="Sunkel C.E."/>
        </authorList>
    </citation>
    <scope>FUNCTION</scope>
</reference>
<reference key="8">
    <citation type="journal article" date="2003" name="Development">
        <title>Orbit/Mast, the CLASP orthologue of Drosophila, is required for asymmetric stem cell and cystocyte divisions and development of the polarised microtubule network that interconnects oocyte and nurse cells during oogenesis.</title>
        <authorList>
            <person name="Mathe E."/>
            <person name="Inoue Y.H."/>
            <person name="Palframan W."/>
            <person name="Brown G."/>
            <person name="Glover D.M."/>
        </authorList>
    </citation>
    <scope>FUNCTION</scope>
    <scope>INTERACTION WITH CLIP-190</scope>
    <scope>SUBCELLULAR LOCATION</scope>
    <scope>TISSUE SPECIFICITY</scope>
</reference>
<reference key="9">
    <citation type="journal article" date="2004" name="J. Cell Biol.">
        <title>Mutations in orbit/mast reveal that the central spindle is comprised of two microtubule populations, those that initiate cleavage and those that propagate furrow ingression.</title>
        <authorList>
            <person name="Inoue Y.H."/>
            <person name="Savoian M.S."/>
            <person name="Suzuki T."/>
            <person name="Mathe E."/>
            <person name="Yamamoto M.-T."/>
            <person name="Glover D.M."/>
        </authorList>
    </citation>
    <scope>FUNCTION</scope>
    <scope>SUBCELLULAR LOCATION</scope>
</reference>
<reference key="10">
    <citation type="journal article" date="2004" name="Neuron">
        <title>The microtubule plus end tracking protein Orbit/MAST/CLASP acts downstream of the tyrosine kinase Abl in mediating axon guidance.</title>
        <authorList>
            <person name="Lee H."/>
            <person name="Engel U."/>
            <person name="Rusch J."/>
            <person name="Scherrer S."/>
            <person name="Sheard K."/>
            <person name="Van Vactor D."/>
        </authorList>
    </citation>
    <scope>FUNCTION</scope>
    <scope>SUBCELLULAR LOCATION</scope>
    <scope>DEVELOPMENTAL STAGE</scope>
</reference>
<reference key="11">
    <citation type="journal article" date="2005" name="Curr. Biol.">
        <title>Length control of the metaphase spindle.</title>
        <authorList>
            <person name="Goshima G."/>
            <person name="Wollman R."/>
            <person name="Stuurman N."/>
            <person name="Scholey J.M."/>
            <person name="Vale R.D."/>
        </authorList>
    </citation>
    <scope>FUNCTION</scope>
</reference>
<reference key="12">
    <citation type="journal article" date="2005" name="Nat. Cell Biol.">
        <title>Drosophila CLASP is required for the incorporation of microtubule subunits into fluxing kinetochore fibres.</title>
        <authorList>
            <person name="Maiato H."/>
            <person name="Khodjakov A."/>
            <person name="Rieder C.L."/>
        </authorList>
    </citation>
    <scope>FUNCTION</scope>
</reference>
<reference key="13">
    <citation type="journal article" date="2006" name="J. Cell Sci.">
        <title>Antagonistic activities of Klp10A and Orbit regulate spindle length, bipolarity and function in vivo.</title>
        <authorList>
            <person name="Laycock J.E."/>
            <person name="Savoian M.S."/>
            <person name="Glover D.M."/>
        </authorList>
    </citation>
    <scope>FUNCTION</scope>
</reference>
<reference key="14">
    <citation type="journal article" date="2007" name="Mol. Biosyst.">
        <title>An integrated chemical, mass spectrometric and computational strategy for (quantitative) phosphoproteomics: application to Drosophila melanogaster Kc167 cells.</title>
        <authorList>
            <person name="Bodenmiller B."/>
            <person name="Mueller L.N."/>
            <person name="Pedrioli P.G.A."/>
            <person name="Pflieger D."/>
            <person name="Juenger M.A."/>
            <person name="Eng J.K."/>
            <person name="Aebersold R."/>
            <person name="Tao W.A."/>
        </authorList>
    </citation>
    <scope>PHOSPHORYLATION [LARGE SCALE ANALYSIS] AT SER-582; SER-626; SER-1120 AND SER-1123</scope>
    <scope>IDENTIFICATION BY MASS SPECTROMETRY</scope>
</reference>
<reference key="15">
    <citation type="journal article" date="2008" name="J. Proteome Res.">
        <title>Phosphoproteome analysis of Drosophila melanogaster embryos.</title>
        <authorList>
            <person name="Zhai B."/>
            <person name="Villen J."/>
            <person name="Beausoleil S.A."/>
            <person name="Mintseris J."/>
            <person name="Gygi S.P."/>
        </authorList>
    </citation>
    <scope>PHOSPHORYLATION [LARGE SCALE ANALYSIS] AT SER-634; THR-648; SER-806; SER-817; SER-820; SER-822; SER-824; SER-1120; SER-1123 AND SER-1124</scope>
    <scope>IDENTIFICATION BY MASS SPECTROMETRY</scope>
    <source>
        <tissue>Embryo</tissue>
    </source>
</reference>
<sequence>MAYRKPSDLDGFIQQMPKADMRVKVQLAEDLVTFLSDDTNSIVCTDMGFLIDGLMPWLTGSHFKIAQKSLEAFSELIKRLGSDFNAYTATVLPHVIDRLGDSRDTVREKAQLLLRDLMEHRVLPPQALIDKLATSCFKHKNAKVREEFLQTIVNALHEYGTQQLSVRVYIPPVCALLGDPTVNVREAAIQTLVEIYKHVGDRLRPDLRRMDDVPASKLAMLEQKFDQVKQEGLLLPSALKNTNGNGVGLDEADNIGLRERPTRMIKRPLHSAVSSSLRPKPNVNDVTGDAGAVTMESFESSFEVVPQLNIFHAKDMDDIYKQVLVIISDKNADWEKRVDALKKIRALLILSYHTQPQFVAVQLKELSLSFVDILKEELRSQVIREACITIAYMSKTLRNKLDAFCWSILEHLINLIQNSAKVIASASTIALKYIIKYTHAPKLLKIYTDTLNQSKSKDIRSTLCELMVLLFEEWQTKALERNATVLRDTLKKSIGDADCDARRHSRYAYWAFRRHFPELADQIYGTLDIAAQRALEREREGGGGGGTGTGTGTAPETRRTVSRIGRTPGTLQKPTPSMRSISAVDTAAAQRAKVRAQYTLYSRQRKPLGPNNSNQASMTGAAASGSLPRPRLNSNSGGTPATTPGSVTPRPRGRAGVSQSQPGSRSTSPSTKLRDQYGGIGNYYRGATGAIPKKASGIPRSTASSRETSPTRSGGGLMKRSMYSTGAGSRRTPERNNPVRPSAAARLLAQSREAEHTLGVGDDGQPDYVSGDYMRSGGMRMGRKLMGRDESDDIDSEASSVCSERSFDSSYTRGNKSNYSLSGSHTRLDWSTQRAPFDDIETIIQFCASTHWSERKDGLISLTQYLADGKELTQQQLKCVLDMFRKMFMDTHTKVYSLFLDTVTELILVHANELHEWLFILLTRLFNKLGTDLLNSMHSKIWKTLQVVHEYFPTQLQLKELFRIISDSTQTPTTKTRIAILRFLTDLANTYCKSSDFPSDQSQACERTVLKLAQLAADQKSMELRSQARSCLVALYNLNTPQMTLLLADLPKVYQDSARSCIHSHMRRQSQSCNSGANSPSSSPLSSSSPKPLQSPSVGPFASLQSHHHQLSISSTSPRSRQSSVEQELLFSSELDIQHNIQKTSEEIRHCFGGQYQTALAPNGFNGHLQYHDQGQQDSCASLSSNSKTQSSANTTQSNTPESATMRLDNLERERTTQNAKSPTDDAKVITVSINMAENGELILASNLMESEVVRVALTLTKDQPVELLQTSLTNLGICIKGGNCELPNKHFRSIMRMLLNILEAEHTDVVIAGLHVLSKIMRSNKMRHNWMHFLELILLKIIQCYQHSKEALRDIDSMIPRIAPSLPLDLSINIVNPVIATGEFPTNLCAIKILLEVTEHHGSEITDAHLDIVFPNLARSADDTQSMVRKAAVFCIVKLYFVLGEEKVKPKLSVLNPSKVRLLNVYIEKQRNCISGGGSSTKNSSAASSS</sequence>
<comment type="function">
    <text evidence="2 3 4 5 6 7 8 9 10">Microtubule plus-end tracking protein that promotes the stabilization of dynamic microtubules. Required for several aspects of mitotic spindle formation including the formation of the overlapping central spindle microtubules and kinetochore attachment. Required for the incorporation of tubulin subunits at the plus ends of kinetochore microtubules during poleward microtubule flux. Acts antagonistically to Klp10A and Klp67A to maintain metaphase spindle length. Also required for guidance of CNS axons downstream of Abl. May function to identify a subset of microtubules that probe the peripheral growth cone domain, where guidance signals exert their influence on cytoskeletal organization. Also required during oogenesis for the organization of the polarized microtubule network inside the 16-cell cyst that ensures oocyte differentiation.</text>
</comment>
<comment type="subunit">
    <text evidence="2 3 5">Interacts with CLIP-190 and microtubules.</text>
</comment>
<comment type="subcellular location">
    <subcellularLocation>
        <location>Cytoplasm</location>
        <location>Cytoskeleton</location>
    </subcellularLocation>
    <subcellularLocation>
        <location>Nucleus</location>
    </subcellularLocation>
    <subcellularLocation>
        <location>Cytoplasm</location>
        <location>Cytoskeleton</location>
        <location>Microtubule organizing center</location>
        <location>Centrosome</location>
    </subcellularLocation>
    <subcellularLocation>
        <location>Cytoplasm</location>
        <location>Cytoskeleton</location>
        <location>Spindle</location>
    </subcellularLocation>
    <subcellularLocation>
        <location>Cell projection</location>
        <location>Growth cone</location>
    </subcellularLocation>
    <subcellularLocation>
        <location>Cleavage furrow</location>
    </subcellularLocation>
    <text>Localizes to punctate cytoplasmic foci in interphase. Concentrates on spindle microtubules from prophase to late anaphase. Accumulates on the mid-part of the central spindle during telophase where it remains until cleavage. Subsequently appears at the periphery of the reforming karyomeres. Also localizes to the spindle remnant, cleavage furrows and the fusome of the 16-cell ovarian cyst. Localizes to the axonal growth cone within neurons.</text>
</comment>
<comment type="tissue specificity">
    <text evidence="3 5">Expressed in testis and ovary.</text>
</comment>
<comment type="developmental stage">
    <text evidence="2 3 6">Expressed throughout development, although expression is low in pupae. At late developmental stages expression becomes pronounced in muscles and the nervous system, particularly within the intersegmental nerve b (ISNb).</text>
</comment>
<comment type="similarity">
    <text evidence="13">Belongs to the CLASP family.</text>
</comment>
<comment type="sequence caution" evidence="13">
    <conflict type="frameshift">
        <sequence resource="EMBL-CDS" id="BAA94248"/>
    </conflict>
</comment>
<evidence type="ECO:0000256" key="1">
    <source>
        <dbReference type="SAM" id="MobiDB-lite"/>
    </source>
</evidence>
<evidence type="ECO:0000269" key="2">
    <source>
    </source>
</evidence>
<evidence type="ECO:0000269" key="3">
    <source>
    </source>
</evidence>
<evidence type="ECO:0000269" key="4">
    <source>
    </source>
</evidence>
<evidence type="ECO:0000269" key="5">
    <source>
    </source>
</evidence>
<evidence type="ECO:0000269" key="6">
    <source>
    </source>
</evidence>
<evidence type="ECO:0000269" key="7">
    <source>
    </source>
</evidence>
<evidence type="ECO:0000269" key="8">
    <source>
    </source>
</evidence>
<evidence type="ECO:0000269" key="9">
    <source>
    </source>
</evidence>
<evidence type="ECO:0000269" key="10">
    <source>
    </source>
</evidence>
<evidence type="ECO:0000269" key="11">
    <source>
    </source>
</evidence>
<evidence type="ECO:0000269" key="12">
    <source>
    </source>
</evidence>
<evidence type="ECO:0000305" key="13"/>
<evidence type="ECO:0007829" key="14">
    <source>
        <dbReference type="PDB" id="4G3A"/>
    </source>
</evidence>
<name>CLASP_DROME</name>
<gene>
    <name type="primary">chb</name>
    <name type="synonym">CLASP</name>
    <name type="synonym">Mast</name>
    <name type="synonym">MESR7</name>
    <name type="synonym">orbit</name>
    <name type="ORF">CG32435</name>
</gene>
<organism>
    <name type="scientific">Drosophila melanogaster</name>
    <name type="common">Fruit fly</name>
    <dbReference type="NCBI Taxonomy" id="7227"/>
    <lineage>
        <taxon>Eukaryota</taxon>
        <taxon>Metazoa</taxon>
        <taxon>Ecdysozoa</taxon>
        <taxon>Arthropoda</taxon>
        <taxon>Hexapoda</taxon>
        <taxon>Insecta</taxon>
        <taxon>Pterygota</taxon>
        <taxon>Neoptera</taxon>
        <taxon>Endopterygota</taxon>
        <taxon>Diptera</taxon>
        <taxon>Brachycera</taxon>
        <taxon>Muscomorpha</taxon>
        <taxon>Ephydroidea</taxon>
        <taxon>Drosophilidae</taxon>
        <taxon>Drosophila</taxon>
        <taxon>Sophophora</taxon>
    </lineage>
</organism>
<proteinExistence type="evidence at protein level"/>
<feature type="chain" id="PRO_0000272276" description="CLIP-associating protein">
    <location>
        <begin position="1"/>
        <end position="1491"/>
    </location>
</feature>
<feature type="repeat" description="HEAT 1">
    <location>
        <begin position="44"/>
        <end position="82"/>
    </location>
</feature>
<feature type="repeat" description="HEAT 2">
    <location>
        <begin position="85"/>
        <end position="123"/>
    </location>
</feature>
<feature type="repeat" description="HEAT 3">
    <location>
        <begin position="163"/>
        <end position="201"/>
    </location>
</feature>
<feature type="repeat" description="HEAT 4">
    <location>
        <begin position="402"/>
        <end position="440"/>
    </location>
</feature>
<feature type="repeat" description="HEAT 5">
    <location>
        <begin position="874"/>
        <end position="912"/>
    </location>
</feature>
<feature type="repeat" description="HEAT 6">
    <location>
        <begin position="955"/>
        <end position="993"/>
    </location>
</feature>
<feature type="repeat" description="HEAT 7">
    <location>
        <begin position="1289"/>
        <end position="1327"/>
    </location>
</feature>
<feature type="repeat" description="HEAT 8">
    <location>
        <begin position="1408"/>
        <end position="1446"/>
    </location>
</feature>
<feature type="region of interest" description="Disordered" evidence="1">
    <location>
        <begin position="537"/>
        <end position="586"/>
    </location>
</feature>
<feature type="region of interest" description="Disordered" evidence="1">
    <location>
        <begin position="600"/>
        <end position="739"/>
    </location>
</feature>
<feature type="region of interest" description="Disordered" evidence="1">
    <location>
        <begin position="1065"/>
        <end position="1127"/>
    </location>
</feature>
<feature type="region of interest" description="Disordered" evidence="1">
    <location>
        <begin position="1167"/>
        <end position="1205"/>
    </location>
</feature>
<feature type="compositionally biased region" description="Gly residues" evidence="1">
    <location>
        <begin position="542"/>
        <end position="551"/>
    </location>
</feature>
<feature type="compositionally biased region" description="Polar residues" evidence="1">
    <location>
        <begin position="569"/>
        <end position="580"/>
    </location>
</feature>
<feature type="compositionally biased region" description="Polar residues" evidence="1">
    <location>
        <begin position="632"/>
        <end position="646"/>
    </location>
</feature>
<feature type="compositionally biased region" description="Polar residues" evidence="1">
    <location>
        <begin position="657"/>
        <end position="671"/>
    </location>
</feature>
<feature type="compositionally biased region" description="Polar residues" evidence="1">
    <location>
        <begin position="699"/>
        <end position="712"/>
    </location>
</feature>
<feature type="compositionally biased region" description="Low complexity" evidence="1">
    <location>
        <begin position="1070"/>
        <end position="1097"/>
    </location>
</feature>
<feature type="compositionally biased region" description="Low complexity" evidence="1">
    <location>
        <begin position="1111"/>
        <end position="1124"/>
    </location>
</feature>
<feature type="compositionally biased region" description="Low complexity" evidence="1">
    <location>
        <begin position="1181"/>
        <end position="1200"/>
    </location>
</feature>
<feature type="modified residue" description="Phosphoserine" evidence="11">
    <location>
        <position position="582"/>
    </location>
</feature>
<feature type="modified residue" description="Phosphoserine" evidence="11">
    <location>
        <position position="626"/>
    </location>
</feature>
<feature type="modified residue" description="Phosphoserine" evidence="12">
    <location>
        <position position="634"/>
    </location>
</feature>
<feature type="modified residue" description="Phosphothreonine" evidence="12">
    <location>
        <position position="648"/>
    </location>
</feature>
<feature type="modified residue" description="Phosphoserine" evidence="12">
    <location>
        <position position="806"/>
    </location>
</feature>
<feature type="modified residue" description="Phosphoserine" evidence="12">
    <location>
        <position position="817"/>
    </location>
</feature>
<feature type="modified residue" description="Phosphoserine" evidence="12">
    <location>
        <position position="820"/>
    </location>
</feature>
<feature type="modified residue" description="Phosphoserine" evidence="12">
    <location>
        <position position="822"/>
    </location>
</feature>
<feature type="modified residue" description="Phosphoserine" evidence="12">
    <location>
        <position position="824"/>
    </location>
</feature>
<feature type="modified residue" description="Phosphoserine" evidence="11 12">
    <location>
        <position position="1120"/>
    </location>
</feature>
<feature type="modified residue" description="Phosphoserine" evidence="11 12">
    <location>
        <position position="1123"/>
    </location>
</feature>
<feature type="modified residue" description="Phosphoserine" evidence="12">
    <location>
        <position position="1124"/>
    </location>
</feature>
<feature type="sequence conflict" description="In Ref. 3; BAA94248." evidence="13" ref="3">
    <original>A</original>
    <variation>P</variation>
    <location>
        <position position="744"/>
    </location>
</feature>
<feature type="helix" evidence="14">
    <location>
        <begin position="9"/>
        <end position="15"/>
    </location>
</feature>
<feature type="turn" evidence="14">
    <location>
        <begin position="16"/>
        <end position="18"/>
    </location>
</feature>
<feature type="helix" evidence="14">
    <location>
        <begin position="21"/>
        <end position="36"/>
    </location>
</feature>
<feature type="helix" evidence="14">
    <location>
        <begin position="47"/>
        <end position="58"/>
    </location>
</feature>
<feature type="helix" evidence="14">
    <location>
        <begin position="63"/>
        <end position="80"/>
    </location>
</feature>
<feature type="helix" evidence="14">
    <location>
        <begin position="81"/>
        <end position="86"/>
    </location>
</feature>
<feature type="helix" evidence="14">
    <location>
        <begin position="88"/>
        <end position="98"/>
    </location>
</feature>
<feature type="helix" evidence="14">
    <location>
        <begin position="104"/>
        <end position="119"/>
    </location>
</feature>
<feature type="helix" evidence="14">
    <location>
        <begin position="125"/>
        <end position="136"/>
    </location>
</feature>
<feature type="helix" evidence="14">
    <location>
        <begin position="142"/>
        <end position="159"/>
    </location>
</feature>
<feature type="turn" evidence="14">
    <location>
        <begin position="161"/>
        <end position="163"/>
    </location>
</feature>
<feature type="helix" evidence="14">
    <location>
        <begin position="167"/>
        <end position="169"/>
    </location>
</feature>
<feature type="helix" evidence="14">
    <location>
        <begin position="170"/>
        <end position="175"/>
    </location>
</feature>
<feature type="helix" evidence="14">
    <location>
        <begin position="176"/>
        <end position="178"/>
    </location>
</feature>
<feature type="helix" evidence="14">
    <location>
        <begin position="182"/>
        <end position="199"/>
    </location>
</feature>
<feature type="helix" evidence="14">
    <location>
        <begin position="200"/>
        <end position="202"/>
    </location>
</feature>
<feature type="helix" evidence="14">
    <location>
        <begin position="203"/>
        <end position="208"/>
    </location>
</feature>
<feature type="strand" evidence="14">
    <location>
        <begin position="211"/>
        <end position="213"/>
    </location>
</feature>
<feature type="helix" evidence="14">
    <location>
        <begin position="215"/>
        <end position="229"/>
    </location>
</feature>
<dbReference type="EMBL" id="AF250842">
    <property type="protein sequence ID" value="AAF66060.1"/>
    <property type="molecule type" value="mRNA"/>
</dbReference>
<dbReference type="EMBL" id="AF195498">
    <property type="protein sequence ID" value="AAG28470.1"/>
    <property type="molecule type" value="mRNA"/>
</dbReference>
<dbReference type="EMBL" id="AB031048">
    <property type="protein sequence ID" value="BAA94248.1"/>
    <property type="status" value="ALT_FRAME"/>
    <property type="molecule type" value="mRNA"/>
</dbReference>
<dbReference type="EMBL" id="AE014296">
    <property type="protein sequence ID" value="AAN12151.1"/>
    <property type="molecule type" value="Genomic_DNA"/>
</dbReference>
<dbReference type="EMBL" id="AE014296">
    <property type="protein sequence ID" value="AAN12152.1"/>
    <property type="molecule type" value="Genomic_DNA"/>
</dbReference>
<dbReference type="EMBL" id="AE014296">
    <property type="protein sequence ID" value="AAN12153.1"/>
    <property type="molecule type" value="Genomic_DNA"/>
</dbReference>
<dbReference type="EMBL" id="AY069579">
    <property type="protein sequence ID" value="AAL39724.1"/>
    <property type="molecule type" value="mRNA"/>
</dbReference>
<dbReference type="RefSeq" id="NP_524651.2">
    <property type="nucleotide sequence ID" value="NM_079912.4"/>
</dbReference>
<dbReference type="RefSeq" id="NP_730596.1">
    <property type="nucleotide sequence ID" value="NM_168882.2"/>
</dbReference>
<dbReference type="RefSeq" id="NP_730597.1">
    <property type="nucleotide sequence ID" value="NM_168883.1"/>
</dbReference>
<dbReference type="PDB" id="4G3A">
    <property type="method" value="X-ray"/>
    <property type="resolution" value="1.99 A"/>
    <property type="chains" value="A/B=1-229"/>
</dbReference>
<dbReference type="PDBsum" id="4G3A"/>
<dbReference type="SMR" id="Q9NBD7"/>
<dbReference type="BioGRID" id="68704">
    <property type="interactions" value="39"/>
</dbReference>
<dbReference type="FunCoup" id="Q9NBD7">
    <property type="interactions" value="1240"/>
</dbReference>
<dbReference type="IntAct" id="Q9NBD7">
    <property type="interactions" value="6"/>
</dbReference>
<dbReference type="STRING" id="7227.FBpp0088470"/>
<dbReference type="GlyGen" id="Q9NBD7">
    <property type="glycosylation" value="1 site"/>
</dbReference>
<dbReference type="iPTMnet" id="Q9NBD7"/>
<dbReference type="PaxDb" id="7227-FBpp0088469"/>
<dbReference type="DNASU" id="43901"/>
<dbReference type="EnsemblMetazoa" id="FBtr0089460">
    <property type="protein sequence ID" value="FBpp0088469"/>
    <property type="gene ID" value="FBgn0021760"/>
</dbReference>
<dbReference type="EnsemblMetazoa" id="FBtr0089461">
    <property type="protein sequence ID" value="FBpp0088470"/>
    <property type="gene ID" value="FBgn0021760"/>
</dbReference>
<dbReference type="EnsemblMetazoa" id="FBtr0089462">
    <property type="protein sequence ID" value="FBpp0088471"/>
    <property type="gene ID" value="FBgn0021760"/>
</dbReference>
<dbReference type="GeneID" id="43901"/>
<dbReference type="KEGG" id="dme:Dmel_CG32435"/>
<dbReference type="AGR" id="FB:FBgn0021760"/>
<dbReference type="CTD" id="43901"/>
<dbReference type="FlyBase" id="FBgn0021760">
    <property type="gene designation" value="chb"/>
</dbReference>
<dbReference type="VEuPathDB" id="VectorBase:FBgn0021760"/>
<dbReference type="eggNOG" id="KOG2956">
    <property type="taxonomic scope" value="Eukaryota"/>
</dbReference>
<dbReference type="GeneTree" id="ENSGT00940000168069"/>
<dbReference type="HOGENOM" id="CLU_005060_0_0_1"/>
<dbReference type="InParanoid" id="Q9NBD7"/>
<dbReference type="OMA" id="KMRHNWL"/>
<dbReference type="OrthoDB" id="46159at2759"/>
<dbReference type="PhylomeDB" id="Q9NBD7"/>
<dbReference type="SignaLink" id="Q9NBD7"/>
<dbReference type="BioGRID-ORCS" id="43901">
    <property type="hits" value="1 hit in 3 CRISPR screens"/>
</dbReference>
<dbReference type="CD-CODE" id="2838EF58">
    <property type="entry name" value="Centrosome"/>
</dbReference>
<dbReference type="EvolutionaryTrace" id="Q9NBD7"/>
<dbReference type="GenomeRNAi" id="43901"/>
<dbReference type="PRO" id="PR:Q9NBD7"/>
<dbReference type="Proteomes" id="UP000000803">
    <property type="component" value="Chromosome 3L"/>
</dbReference>
<dbReference type="Bgee" id="FBgn0021760">
    <property type="expression patterns" value="Expressed in midgut large flat cell (Drosophila) in digestive tract and 253 other cell types or tissues"/>
</dbReference>
<dbReference type="GO" id="GO:0045180">
    <property type="term" value="C:basal cortex"/>
    <property type="evidence" value="ECO:0000318"/>
    <property type="project" value="GO_Central"/>
</dbReference>
<dbReference type="GO" id="GO:0005813">
    <property type="term" value="C:centrosome"/>
    <property type="evidence" value="ECO:0000314"/>
    <property type="project" value="FlyBase"/>
</dbReference>
<dbReference type="GO" id="GO:0000775">
    <property type="term" value="C:chromosome, centromeric region"/>
    <property type="evidence" value="ECO:0000314"/>
    <property type="project" value="FlyBase"/>
</dbReference>
<dbReference type="GO" id="GO:0032154">
    <property type="term" value="C:cleavage furrow"/>
    <property type="evidence" value="ECO:0007669"/>
    <property type="project" value="UniProtKB-SubCell"/>
</dbReference>
<dbReference type="GO" id="GO:0070938">
    <property type="term" value="C:contractile ring"/>
    <property type="evidence" value="ECO:0000314"/>
    <property type="project" value="CACAO"/>
</dbReference>
<dbReference type="GO" id="GO:0005737">
    <property type="term" value="C:cytoplasm"/>
    <property type="evidence" value="ECO:0000314"/>
    <property type="project" value="FlyBase"/>
</dbReference>
<dbReference type="GO" id="GO:0005881">
    <property type="term" value="C:cytoplasmic microtubule"/>
    <property type="evidence" value="ECO:0000318"/>
    <property type="project" value="GO_Central"/>
</dbReference>
<dbReference type="GO" id="GO:0045169">
    <property type="term" value="C:fusome"/>
    <property type="evidence" value="ECO:0000314"/>
    <property type="project" value="CACAO"/>
</dbReference>
<dbReference type="GO" id="GO:0045172">
    <property type="term" value="C:germline ring canal"/>
    <property type="evidence" value="ECO:0000314"/>
    <property type="project" value="FlyBase"/>
</dbReference>
<dbReference type="GO" id="GO:0030426">
    <property type="term" value="C:growth cone"/>
    <property type="evidence" value="ECO:0000314"/>
    <property type="project" value="FlyBase"/>
</dbReference>
<dbReference type="GO" id="GO:0000776">
    <property type="term" value="C:kinetochore"/>
    <property type="evidence" value="ECO:0000314"/>
    <property type="project" value="FlyBase"/>
</dbReference>
<dbReference type="GO" id="GO:0005875">
    <property type="term" value="C:microtubule associated complex"/>
    <property type="evidence" value="ECO:0000314"/>
    <property type="project" value="FlyBase"/>
</dbReference>
<dbReference type="GO" id="GO:0005815">
    <property type="term" value="C:microtubule organizing center"/>
    <property type="evidence" value="ECO:0000314"/>
    <property type="project" value="FlyBase"/>
</dbReference>
<dbReference type="GO" id="GO:0035371">
    <property type="term" value="C:microtubule plus-end"/>
    <property type="evidence" value="ECO:0000314"/>
    <property type="project" value="FlyBase"/>
</dbReference>
<dbReference type="GO" id="GO:0072686">
    <property type="term" value="C:mitotic spindle"/>
    <property type="evidence" value="ECO:0000318"/>
    <property type="project" value="GO_Central"/>
</dbReference>
<dbReference type="GO" id="GO:0031965">
    <property type="term" value="C:nuclear membrane"/>
    <property type="evidence" value="ECO:0000314"/>
    <property type="project" value="CACAO"/>
</dbReference>
<dbReference type="GO" id="GO:0005634">
    <property type="term" value="C:nucleus"/>
    <property type="evidence" value="ECO:0000314"/>
    <property type="project" value="FlyBase"/>
</dbReference>
<dbReference type="GO" id="GO:0005827">
    <property type="term" value="C:polar microtubule"/>
    <property type="evidence" value="ECO:0000314"/>
    <property type="project" value="FlyBase"/>
</dbReference>
<dbReference type="GO" id="GO:0045170">
    <property type="term" value="C:spectrosome"/>
    <property type="evidence" value="ECO:0000314"/>
    <property type="project" value="CACAO"/>
</dbReference>
<dbReference type="GO" id="GO:0005819">
    <property type="term" value="C:spindle"/>
    <property type="evidence" value="ECO:0000314"/>
    <property type="project" value="FlyBase"/>
</dbReference>
<dbReference type="GO" id="GO:0070732">
    <property type="term" value="C:spindle envelope"/>
    <property type="evidence" value="ECO:0000314"/>
    <property type="project" value="CACAO"/>
</dbReference>
<dbReference type="GO" id="GO:0005876">
    <property type="term" value="C:spindle microtubule"/>
    <property type="evidence" value="ECO:0000314"/>
    <property type="project" value="FlyBase"/>
</dbReference>
<dbReference type="GO" id="GO:0000922">
    <property type="term" value="C:spindle pole"/>
    <property type="evidence" value="ECO:0000314"/>
    <property type="project" value="FlyBase"/>
</dbReference>
<dbReference type="GO" id="GO:0005525">
    <property type="term" value="F:GTP binding"/>
    <property type="evidence" value="ECO:0000314"/>
    <property type="project" value="FlyBase"/>
</dbReference>
<dbReference type="GO" id="GO:0008017">
    <property type="term" value="F:microtubule binding"/>
    <property type="evidence" value="ECO:0000314"/>
    <property type="project" value="FlyBase"/>
</dbReference>
<dbReference type="GO" id="GO:0051315">
    <property type="term" value="P:attachment of mitotic spindle microtubules to kinetochore"/>
    <property type="evidence" value="ECO:0000315"/>
    <property type="project" value="FlyBase"/>
</dbReference>
<dbReference type="GO" id="GO:0007411">
    <property type="term" value="P:axon guidance"/>
    <property type="evidence" value="ECO:0000315"/>
    <property type="project" value="FlyBase"/>
</dbReference>
<dbReference type="GO" id="GO:0007282">
    <property type="term" value="P:cystoblast division"/>
    <property type="evidence" value="ECO:0000315"/>
    <property type="project" value="FlyBase"/>
</dbReference>
<dbReference type="GO" id="GO:0040001">
    <property type="term" value="P:establishment of mitotic spindle localization"/>
    <property type="evidence" value="ECO:0000315"/>
    <property type="project" value="FlyBase"/>
</dbReference>
<dbReference type="GO" id="GO:0035099">
    <property type="term" value="P:hemocyte migration"/>
    <property type="evidence" value="ECO:0000315"/>
    <property type="project" value="FlyBase"/>
</dbReference>
<dbReference type="GO" id="GO:0000278">
    <property type="term" value="P:mitotic cell cycle"/>
    <property type="evidence" value="ECO:0000315"/>
    <property type="project" value="FlyBase"/>
</dbReference>
<dbReference type="GO" id="GO:0000070">
    <property type="term" value="P:mitotic sister chromatid segregation"/>
    <property type="evidence" value="ECO:0000315"/>
    <property type="project" value="FlyBase"/>
</dbReference>
<dbReference type="GO" id="GO:0090307">
    <property type="term" value="P:mitotic spindle assembly"/>
    <property type="evidence" value="ECO:0000315"/>
    <property type="project" value="UniProtKB"/>
</dbReference>
<dbReference type="GO" id="GO:0000022">
    <property type="term" value="P:mitotic spindle elongation"/>
    <property type="evidence" value="ECO:0000315"/>
    <property type="project" value="FlyBase"/>
</dbReference>
<dbReference type="GO" id="GO:0007052">
    <property type="term" value="P:mitotic spindle organization"/>
    <property type="evidence" value="ECO:0000315"/>
    <property type="project" value="FlyBase"/>
</dbReference>
<dbReference type="GO" id="GO:0016325">
    <property type="term" value="P:oocyte microtubule cytoskeleton organization"/>
    <property type="evidence" value="ECO:0000315"/>
    <property type="project" value="FlyBase"/>
</dbReference>
<dbReference type="GO" id="GO:0048477">
    <property type="term" value="P:oogenesis"/>
    <property type="evidence" value="ECO:0000315"/>
    <property type="project" value="FlyBase"/>
</dbReference>
<dbReference type="GO" id="GO:0030723">
    <property type="term" value="P:ovarian fusome organization"/>
    <property type="evidence" value="ECO:0000315"/>
    <property type="project" value="FlyBase"/>
</dbReference>
<dbReference type="GO" id="GO:0031116">
    <property type="term" value="P:positive regulation of microtubule polymerization"/>
    <property type="evidence" value="ECO:0000315"/>
    <property type="project" value="UniProtKB"/>
</dbReference>
<dbReference type="GO" id="GO:0046602">
    <property type="term" value="P:regulation of mitotic centrosome separation"/>
    <property type="evidence" value="ECO:0000315"/>
    <property type="project" value="FlyBase"/>
</dbReference>
<dbReference type="GO" id="GO:0051225">
    <property type="term" value="P:spindle assembly"/>
    <property type="evidence" value="ECO:0000315"/>
    <property type="project" value="FlyBase"/>
</dbReference>
<dbReference type="GO" id="GO:0007051">
    <property type="term" value="P:spindle organization"/>
    <property type="evidence" value="ECO:0000315"/>
    <property type="project" value="FlyBase"/>
</dbReference>
<dbReference type="GO" id="GO:0019827">
    <property type="term" value="P:stem cell population maintenance"/>
    <property type="evidence" value="ECO:0000315"/>
    <property type="project" value="FlyBase"/>
</dbReference>
<dbReference type="FunFam" id="1.25.10.10:FF:001235">
    <property type="entry name" value="CLIP-associating protein"/>
    <property type="match status" value="1"/>
</dbReference>
<dbReference type="FunFam" id="1.25.10.10:FF:000577">
    <property type="entry name" value="Uncharacterized protein, isoform A"/>
    <property type="match status" value="1"/>
</dbReference>
<dbReference type="FunFam" id="1.25.10.10:FF:001086">
    <property type="entry name" value="Uncharacterized protein, isoform A"/>
    <property type="match status" value="1"/>
</dbReference>
<dbReference type="Gene3D" id="1.25.10.10">
    <property type="entry name" value="Leucine-rich Repeat Variant"/>
    <property type="match status" value="4"/>
</dbReference>
<dbReference type="InterPro" id="IPR011989">
    <property type="entry name" value="ARM-like"/>
</dbReference>
<dbReference type="InterPro" id="IPR016024">
    <property type="entry name" value="ARM-type_fold"/>
</dbReference>
<dbReference type="InterPro" id="IPR024395">
    <property type="entry name" value="CLASP_N_dom"/>
</dbReference>
<dbReference type="InterPro" id="IPR021133">
    <property type="entry name" value="HEAT_type_2"/>
</dbReference>
<dbReference type="InterPro" id="IPR034085">
    <property type="entry name" value="TOG"/>
</dbReference>
<dbReference type="InterPro" id="IPR048491">
    <property type="entry name" value="XMAP215_CLASP_TOG"/>
</dbReference>
<dbReference type="PANTHER" id="PTHR21567">
    <property type="entry name" value="CLASP"/>
    <property type="match status" value="1"/>
</dbReference>
<dbReference type="PANTHER" id="PTHR21567:SF9">
    <property type="entry name" value="CLIP-ASSOCIATING PROTEIN"/>
    <property type="match status" value="1"/>
</dbReference>
<dbReference type="Pfam" id="PF21040">
    <property type="entry name" value="CEP104-like_TOG"/>
    <property type="match status" value="1"/>
</dbReference>
<dbReference type="Pfam" id="PF12348">
    <property type="entry name" value="CLASP_N"/>
    <property type="match status" value="1"/>
</dbReference>
<dbReference type="Pfam" id="PF21041">
    <property type="entry name" value="XMAP215_CLASP_TOG"/>
    <property type="match status" value="1"/>
</dbReference>
<dbReference type="SMART" id="SM01349">
    <property type="entry name" value="TOG"/>
    <property type="match status" value="4"/>
</dbReference>
<dbReference type="SUPFAM" id="SSF48371">
    <property type="entry name" value="ARM repeat"/>
    <property type="match status" value="1"/>
</dbReference>
<dbReference type="PROSITE" id="PS50077">
    <property type="entry name" value="HEAT_REPEAT"/>
    <property type="match status" value="2"/>
</dbReference>
<keyword id="KW-0002">3D-structure</keyword>
<keyword id="KW-0131">Cell cycle</keyword>
<keyword id="KW-0132">Cell division</keyword>
<keyword id="KW-0966">Cell projection</keyword>
<keyword id="KW-0963">Cytoplasm</keyword>
<keyword id="KW-0206">Cytoskeleton</keyword>
<keyword id="KW-0217">Developmental protein</keyword>
<keyword id="KW-0221">Differentiation</keyword>
<keyword id="KW-0493">Microtubule</keyword>
<keyword id="KW-0498">Mitosis</keyword>
<keyword id="KW-0539">Nucleus</keyword>
<keyword id="KW-0896">Oogenesis</keyword>
<keyword id="KW-0597">Phosphoprotein</keyword>
<keyword id="KW-1185">Reference proteome</keyword>
<keyword id="KW-0677">Repeat</keyword>
<protein>
    <recommendedName>
        <fullName>CLIP-associating protein</fullName>
    </recommendedName>
    <alternativeName>
        <fullName>Misexpression suppressor of ras 7</fullName>
    </alternativeName>
    <alternativeName>
        <fullName>Protein Multiple asters</fullName>
        <shortName>Mast</shortName>
    </alternativeName>
    <alternativeName>
        <fullName>Protein Orbit</fullName>
    </alternativeName>
    <alternativeName>
        <fullName>Protein chromosome bows</fullName>
    </alternativeName>
</protein>